<evidence type="ECO:0000255" key="1"/>
<evidence type="ECO:0000255" key="2">
    <source>
        <dbReference type="PROSITE-ProRule" id="PRU00434"/>
    </source>
</evidence>
<evidence type="ECO:0000256" key="3">
    <source>
        <dbReference type="SAM" id="MobiDB-lite"/>
    </source>
</evidence>
<evidence type="ECO:0000269" key="4">
    <source>
    </source>
</evidence>
<evidence type="ECO:0000269" key="5">
    <source>
    </source>
</evidence>
<evidence type="ECO:0000269" key="6">
    <source ref="1"/>
</evidence>
<evidence type="ECO:0000303" key="7">
    <source>
    </source>
</evidence>
<evidence type="ECO:0000305" key="8"/>
<evidence type="ECO:0000305" key="9">
    <source>
    </source>
</evidence>
<accession>Q8WWZ4</accession>
<accession>C9JZH2</accession>
<accession>C9K035</accession>
<accession>Q6PIQ6</accession>
<accession>Q7Z2I9</accession>
<accession>Q7Z7P7</accession>
<accession>Q86TD2</accession>
<protein>
    <recommendedName>
        <fullName evidence="8">ATP-binding cassette sub-family A member 10</fullName>
        <ecNumber evidence="9">7.6.2.-</ecNumber>
    </recommendedName>
</protein>
<name>ABCAA_HUMAN</name>
<feature type="chain" id="PRO_0000253572" description="ATP-binding cassette sub-family A member 10">
    <location>
        <begin position="1"/>
        <end position="1543"/>
    </location>
</feature>
<feature type="transmembrane region" description="Helical" evidence="1">
    <location>
        <begin position="83"/>
        <end position="103"/>
    </location>
</feature>
<feature type="transmembrane region" description="Helical" evidence="1">
    <location>
        <begin position="135"/>
        <end position="155"/>
    </location>
</feature>
<feature type="transmembrane region" description="Helical" evidence="1">
    <location>
        <begin position="185"/>
        <end position="205"/>
    </location>
</feature>
<feature type="transmembrane region" description="Helical" evidence="1">
    <location>
        <begin position="210"/>
        <end position="230"/>
    </location>
</feature>
<feature type="transmembrane region" description="Helical" evidence="1">
    <location>
        <begin position="240"/>
        <end position="260"/>
    </location>
</feature>
<feature type="transmembrane region" description="Helical" evidence="1">
    <location>
        <begin position="264"/>
        <end position="284"/>
    </location>
</feature>
<feature type="transmembrane region" description="Helical" evidence="1">
    <location>
        <begin position="310"/>
        <end position="330"/>
    </location>
</feature>
<feature type="transmembrane region" description="Helical" evidence="1">
    <location>
        <begin position="774"/>
        <end position="794"/>
    </location>
</feature>
<feature type="transmembrane region" description="Helical" evidence="1">
    <location>
        <begin position="890"/>
        <end position="910"/>
    </location>
</feature>
<feature type="transmembrane region" description="Helical" evidence="1">
    <location>
        <begin position="926"/>
        <end position="946"/>
    </location>
</feature>
<feature type="transmembrane region" description="Helical" evidence="1">
    <location>
        <begin position="985"/>
        <end position="1005"/>
    </location>
</feature>
<feature type="transmembrane region" description="Helical" evidence="1">
    <location>
        <begin position="1014"/>
        <end position="1034"/>
    </location>
</feature>
<feature type="transmembrane region" description="Helical" evidence="1">
    <location>
        <begin position="1046"/>
        <end position="1066"/>
    </location>
</feature>
<feature type="transmembrane region" description="Helical" evidence="1">
    <location>
        <begin position="1073"/>
        <end position="1093"/>
    </location>
</feature>
<feature type="transmembrane region" description="Helical" evidence="1">
    <location>
        <begin position="1113"/>
        <end position="1133"/>
    </location>
</feature>
<feature type="domain" description="ABC transporter 1" evidence="2">
    <location>
        <begin position="391"/>
        <end position="626"/>
    </location>
</feature>
<feature type="domain" description="ABC transporter 2" evidence="2">
    <location>
        <begin position="1206"/>
        <end position="1440"/>
    </location>
</feature>
<feature type="region of interest" description="Disordered" evidence="3">
    <location>
        <begin position="1153"/>
        <end position="1177"/>
    </location>
</feature>
<feature type="compositionally biased region" description="Basic and acidic residues" evidence="3">
    <location>
        <begin position="1153"/>
        <end position="1164"/>
    </location>
</feature>
<feature type="compositionally biased region" description="Acidic residues" evidence="3">
    <location>
        <begin position="1165"/>
        <end position="1174"/>
    </location>
</feature>
<feature type="binding site" evidence="2">
    <location>
        <begin position="427"/>
        <end position="434"/>
    </location>
    <ligand>
        <name>ATP</name>
        <dbReference type="ChEBI" id="CHEBI:30616"/>
        <label>1</label>
    </ligand>
</feature>
<feature type="binding site" evidence="2">
    <location>
        <begin position="1239"/>
        <end position="1246"/>
    </location>
    <ligand>
        <name>ATP</name>
        <dbReference type="ChEBI" id="CHEBI:30616"/>
        <label>2</label>
    </ligand>
</feature>
<feature type="splice variant" id="VSP_021061" description="In isoform 2." evidence="8">
    <location>
        <begin position="1"/>
        <end position="23"/>
    </location>
</feature>
<feature type="splice variant" id="VSP_021062" description="In isoform 3." evidence="8">
    <original>E</original>
    <variation>GHNKSFCNGGVDISYWNKYEDTTFHF</variation>
    <location>
        <position position="67"/>
    </location>
</feature>
<feature type="splice variant" id="VSP_021063" description="In isoform 3." evidence="8">
    <location>
        <begin position="68"/>
        <end position="1543"/>
    </location>
</feature>
<feature type="splice variant" id="VSP_021064" description="In isoform 5." evidence="7">
    <original>IFFDIYEGQITAILGHNGAGKSTLLNILSGLSVSTEGSAT</original>
    <variation>SEERLCPAAHRLRCGERLCPAAHHLGCEERPCPAATPSGN</variation>
    <location>
        <begin position="413"/>
        <end position="452"/>
    </location>
</feature>
<feature type="splice variant" id="VSP_021065" description="In isoform 4." evidence="8">
    <original>S</original>
    <variation>KKNYNGIRHAKHSRHYC</variation>
    <location>
        <position position="450"/>
    </location>
</feature>
<feature type="splice variant" id="VSP_021066" description="In isoform 4." evidence="8">
    <location>
        <begin position="451"/>
        <end position="1543"/>
    </location>
</feature>
<feature type="splice variant" id="VSP_021067" description="In isoform 5." evidence="7">
    <location>
        <begin position="453"/>
        <end position="1543"/>
    </location>
</feature>
<feature type="sequence variant" id="VAR_028384" description="In dbSNP:rs9909216." evidence="4 5 6">
    <original>P</original>
    <variation>S</variation>
    <location>
        <position position="203"/>
    </location>
</feature>
<feature type="sequence variant" id="VAR_028385" description="In dbSNP:rs11657804." evidence="4 5 6">
    <original>I</original>
    <variation>V</variation>
    <location>
        <position position="287"/>
    </location>
</feature>
<feature type="sequence variant" id="VAR_028386" description="In dbSNP:rs4968849." evidence="6">
    <original>M</original>
    <variation>T</variation>
    <location>
        <position position="916"/>
    </location>
</feature>
<feature type="sequence variant" id="VAR_055469" description="In dbSNP:rs10491178.">
    <original>R</original>
    <variation>W</variation>
    <location>
        <position position="1322"/>
    </location>
</feature>
<feature type="sequence conflict" description="In Ref. 3; CAD89903." evidence="8" ref="3">
    <original>C</original>
    <variation>Y</variation>
    <location>
        <position position="140"/>
    </location>
</feature>
<feature type="sequence conflict" description="In Ref. 3; CAD89903." evidence="8" ref="3">
    <original>R</original>
    <variation>G</variation>
    <location>
        <position position="159"/>
    </location>
</feature>
<feature type="sequence conflict" description="In Ref. 3; CAD89903." evidence="8" ref="3">
    <original>F</original>
    <variation>S</variation>
    <location>
        <position position="187"/>
    </location>
</feature>
<feature type="sequence conflict" description="In Ref. 3; CAD89903." evidence="8" ref="3">
    <original>L</original>
    <variation>S</variation>
    <location>
        <position position="324"/>
    </location>
</feature>
<feature type="sequence conflict" description="In Ref. 3; CAD89903." evidence="8" ref="3">
    <original>F</original>
    <variation>L</variation>
    <location>
        <position position="364"/>
    </location>
</feature>
<feature type="sequence conflict" description="In Ref. 2; AAO72160/AAO72161 and 4; AAH51320." evidence="8" ref="2 4">
    <original>R</original>
    <variation>I</variation>
    <location>
        <position position="1216"/>
    </location>
</feature>
<organism>
    <name type="scientific">Homo sapiens</name>
    <name type="common">Human</name>
    <dbReference type="NCBI Taxonomy" id="9606"/>
    <lineage>
        <taxon>Eukaryota</taxon>
        <taxon>Metazoa</taxon>
        <taxon>Chordata</taxon>
        <taxon>Craniata</taxon>
        <taxon>Vertebrata</taxon>
        <taxon>Euteleostomi</taxon>
        <taxon>Mammalia</taxon>
        <taxon>Eutheria</taxon>
        <taxon>Euarchontoglires</taxon>
        <taxon>Primates</taxon>
        <taxon>Haplorrhini</taxon>
        <taxon>Catarrhini</taxon>
        <taxon>Hominidae</taxon>
        <taxon>Homo</taxon>
    </lineage>
</organism>
<gene>
    <name type="primary">ABCA10</name>
</gene>
<keyword id="KW-0025">Alternative splicing</keyword>
<keyword id="KW-0067">ATP-binding</keyword>
<keyword id="KW-0472">Membrane</keyword>
<keyword id="KW-0547">Nucleotide-binding</keyword>
<keyword id="KW-1185">Reference proteome</keyword>
<keyword id="KW-0677">Repeat</keyword>
<keyword id="KW-1278">Translocase</keyword>
<keyword id="KW-0812">Transmembrane</keyword>
<keyword id="KW-1133">Transmembrane helix</keyword>
<keyword id="KW-0813">Transport</keyword>
<comment type="function">
    <text evidence="9">Probable transporter which may play a role in macrophage lipid transport and homeostasis.</text>
</comment>
<comment type="subcellular location">
    <subcellularLocation>
        <location evidence="8">Membrane</location>
        <topology evidence="8">Multi-pass membrane protein</topology>
    </subcellularLocation>
</comment>
<comment type="alternative products">
    <event type="alternative splicing"/>
    <isoform>
        <id>Q8WWZ4-1</id>
        <name>1</name>
        <sequence type="displayed"/>
    </isoform>
    <isoform>
        <id>Q8WWZ4-2</id>
        <name>2</name>
        <name>ABCA10delta+82</name>
        <sequence type="described" ref="VSP_021061"/>
    </isoform>
    <isoform>
        <id>Q8WWZ4-3</id>
        <name>3</name>
        <name>ABCA10delta-104</name>
        <sequence type="described" ref="VSP_021062 VSP_021063"/>
    </isoform>
    <isoform>
        <id>Q8WWZ4-4</id>
        <name>4</name>
        <name>ABCA10delta-176</name>
        <sequence type="described" ref="VSP_021065 VSP_021066"/>
    </isoform>
    <isoform>
        <id>Q8WWZ4-5</id>
        <name>5</name>
        <sequence type="described" ref="VSP_021064 VSP_021067"/>
    </isoform>
</comment>
<comment type="tissue specificity">
    <text evidence="4 6">Widely expressed. Highly expressed in skeletal muscle, heart, brain and gastrointestinal tract.</text>
</comment>
<comment type="induction">
    <text evidence="4">Down-regulated by cholesterol loading of macrophages.</text>
</comment>
<comment type="similarity">
    <text evidence="8">Belongs to the ABC transporter superfamily. ABCA family.</text>
</comment>
<comment type="online information" name="ABCMdb">
    <link uri="http://abcm2.hegelab.org/search"/>
    <text>Database for mutations in ABC proteins</text>
</comment>
<dbReference type="EC" id="7.6.2.-" evidence="9"/>
<dbReference type="EMBL" id="AY028900">
    <property type="protein sequence ID" value="AAK30025.1"/>
    <property type="molecule type" value="mRNA"/>
</dbReference>
<dbReference type="EMBL" id="AY247065">
    <property type="protein sequence ID" value="AAO72161.1"/>
    <property type="molecule type" value="mRNA"/>
</dbReference>
<dbReference type="EMBL" id="AY247105">
    <property type="protein sequence ID" value="AAO72160.1"/>
    <property type="molecule type" value="Genomic_DNA"/>
</dbReference>
<dbReference type="EMBL" id="AY247069">
    <property type="protein sequence ID" value="AAO72160.1"/>
    <property type="status" value="JOINED"/>
    <property type="molecule type" value="Genomic_DNA"/>
</dbReference>
<dbReference type="EMBL" id="AY247070">
    <property type="protein sequence ID" value="AAO72160.1"/>
    <property type="status" value="JOINED"/>
    <property type="molecule type" value="Genomic_DNA"/>
</dbReference>
<dbReference type="EMBL" id="AY247071">
    <property type="protein sequence ID" value="AAO72160.1"/>
    <property type="status" value="JOINED"/>
    <property type="molecule type" value="Genomic_DNA"/>
</dbReference>
<dbReference type="EMBL" id="AY247072">
    <property type="protein sequence ID" value="AAO72160.1"/>
    <property type="status" value="JOINED"/>
    <property type="molecule type" value="Genomic_DNA"/>
</dbReference>
<dbReference type="EMBL" id="AY247073">
    <property type="protein sequence ID" value="AAO72160.1"/>
    <property type="status" value="JOINED"/>
    <property type="molecule type" value="Genomic_DNA"/>
</dbReference>
<dbReference type="EMBL" id="AY247074">
    <property type="protein sequence ID" value="AAO72160.1"/>
    <property type="status" value="JOINED"/>
    <property type="molecule type" value="Genomic_DNA"/>
</dbReference>
<dbReference type="EMBL" id="AY247075">
    <property type="protein sequence ID" value="AAO72160.1"/>
    <property type="status" value="JOINED"/>
    <property type="molecule type" value="Genomic_DNA"/>
</dbReference>
<dbReference type="EMBL" id="AY247076">
    <property type="protein sequence ID" value="AAO72160.1"/>
    <property type="status" value="JOINED"/>
    <property type="molecule type" value="Genomic_DNA"/>
</dbReference>
<dbReference type="EMBL" id="AY247077">
    <property type="protein sequence ID" value="AAO72160.1"/>
    <property type="status" value="JOINED"/>
    <property type="molecule type" value="Genomic_DNA"/>
</dbReference>
<dbReference type="EMBL" id="AY247078">
    <property type="protein sequence ID" value="AAO72160.1"/>
    <property type="status" value="JOINED"/>
    <property type="molecule type" value="Genomic_DNA"/>
</dbReference>
<dbReference type="EMBL" id="AY247079">
    <property type="protein sequence ID" value="AAO72160.1"/>
    <property type="status" value="JOINED"/>
    <property type="molecule type" value="Genomic_DNA"/>
</dbReference>
<dbReference type="EMBL" id="AY247080">
    <property type="protein sequence ID" value="AAO72160.1"/>
    <property type="status" value="JOINED"/>
    <property type="molecule type" value="Genomic_DNA"/>
</dbReference>
<dbReference type="EMBL" id="AY247081">
    <property type="protein sequence ID" value="AAO72160.1"/>
    <property type="status" value="JOINED"/>
    <property type="molecule type" value="Genomic_DNA"/>
</dbReference>
<dbReference type="EMBL" id="AY247082">
    <property type="protein sequence ID" value="AAO72160.1"/>
    <property type="status" value="JOINED"/>
    <property type="molecule type" value="Genomic_DNA"/>
</dbReference>
<dbReference type="EMBL" id="AY247083">
    <property type="protein sequence ID" value="AAO72160.1"/>
    <property type="status" value="JOINED"/>
    <property type="molecule type" value="Genomic_DNA"/>
</dbReference>
<dbReference type="EMBL" id="AY247084">
    <property type="protein sequence ID" value="AAO72160.1"/>
    <property type="status" value="JOINED"/>
    <property type="molecule type" value="Genomic_DNA"/>
</dbReference>
<dbReference type="EMBL" id="AY247085">
    <property type="protein sequence ID" value="AAO72160.1"/>
    <property type="status" value="JOINED"/>
    <property type="molecule type" value="Genomic_DNA"/>
</dbReference>
<dbReference type="EMBL" id="AY247086">
    <property type="protein sequence ID" value="AAO72160.1"/>
    <property type="status" value="JOINED"/>
    <property type="molecule type" value="Genomic_DNA"/>
</dbReference>
<dbReference type="EMBL" id="AY247087">
    <property type="protein sequence ID" value="AAO72160.1"/>
    <property type="status" value="JOINED"/>
    <property type="molecule type" value="Genomic_DNA"/>
</dbReference>
<dbReference type="EMBL" id="AY247088">
    <property type="protein sequence ID" value="AAO72160.1"/>
    <property type="status" value="JOINED"/>
    <property type="molecule type" value="Genomic_DNA"/>
</dbReference>
<dbReference type="EMBL" id="AY247089">
    <property type="protein sequence ID" value="AAO72160.1"/>
    <property type="status" value="JOINED"/>
    <property type="molecule type" value="Genomic_DNA"/>
</dbReference>
<dbReference type="EMBL" id="AY247090">
    <property type="protein sequence ID" value="AAO72160.1"/>
    <property type="status" value="JOINED"/>
    <property type="molecule type" value="Genomic_DNA"/>
</dbReference>
<dbReference type="EMBL" id="AY247091">
    <property type="protein sequence ID" value="AAO72160.1"/>
    <property type="status" value="JOINED"/>
    <property type="molecule type" value="Genomic_DNA"/>
</dbReference>
<dbReference type="EMBL" id="AY247092">
    <property type="protein sequence ID" value="AAO72160.1"/>
    <property type="status" value="JOINED"/>
    <property type="molecule type" value="Genomic_DNA"/>
</dbReference>
<dbReference type="EMBL" id="AY247093">
    <property type="protein sequence ID" value="AAO72160.1"/>
    <property type="status" value="JOINED"/>
    <property type="molecule type" value="Genomic_DNA"/>
</dbReference>
<dbReference type="EMBL" id="AY247094">
    <property type="protein sequence ID" value="AAO72160.1"/>
    <property type="status" value="JOINED"/>
    <property type="molecule type" value="Genomic_DNA"/>
</dbReference>
<dbReference type="EMBL" id="AY247095">
    <property type="protein sequence ID" value="AAO72160.1"/>
    <property type="status" value="JOINED"/>
    <property type="molecule type" value="Genomic_DNA"/>
</dbReference>
<dbReference type="EMBL" id="AY247096">
    <property type="protein sequence ID" value="AAO72160.1"/>
    <property type="status" value="JOINED"/>
    <property type="molecule type" value="Genomic_DNA"/>
</dbReference>
<dbReference type="EMBL" id="AY247097">
    <property type="protein sequence ID" value="AAO72160.1"/>
    <property type="status" value="JOINED"/>
    <property type="molecule type" value="Genomic_DNA"/>
</dbReference>
<dbReference type="EMBL" id="AY247098">
    <property type="protein sequence ID" value="AAO72160.1"/>
    <property type="status" value="JOINED"/>
    <property type="molecule type" value="Genomic_DNA"/>
</dbReference>
<dbReference type="EMBL" id="AY247099">
    <property type="protein sequence ID" value="AAO72160.1"/>
    <property type="status" value="JOINED"/>
    <property type="molecule type" value="Genomic_DNA"/>
</dbReference>
<dbReference type="EMBL" id="AY247100">
    <property type="protein sequence ID" value="AAO72160.1"/>
    <property type="status" value="JOINED"/>
    <property type="molecule type" value="Genomic_DNA"/>
</dbReference>
<dbReference type="EMBL" id="AY247101">
    <property type="protein sequence ID" value="AAO72160.1"/>
    <property type="status" value="JOINED"/>
    <property type="molecule type" value="Genomic_DNA"/>
</dbReference>
<dbReference type="EMBL" id="AY247102">
    <property type="protein sequence ID" value="AAO72160.1"/>
    <property type="status" value="JOINED"/>
    <property type="molecule type" value="Genomic_DNA"/>
</dbReference>
<dbReference type="EMBL" id="AY247103">
    <property type="protein sequence ID" value="AAO72160.1"/>
    <property type="status" value="JOINED"/>
    <property type="molecule type" value="Genomic_DNA"/>
</dbReference>
<dbReference type="EMBL" id="AY247104">
    <property type="protein sequence ID" value="AAO72160.1"/>
    <property type="status" value="JOINED"/>
    <property type="molecule type" value="Genomic_DNA"/>
</dbReference>
<dbReference type="EMBL" id="AL832004">
    <property type="protein sequence ID" value="CAD89903.1"/>
    <property type="molecule type" value="mRNA"/>
</dbReference>
<dbReference type="EMBL" id="AC005495">
    <property type="status" value="NOT_ANNOTATED_CDS"/>
    <property type="molecule type" value="Genomic_DNA"/>
</dbReference>
<dbReference type="EMBL" id="BC031026">
    <property type="protein sequence ID" value="AAH31026.1"/>
    <property type="molecule type" value="mRNA"/>
</dbReference>
<dbReference type="EMBL" id="BC051320">
    <property type="protein sequence ID" value="AAH51320.1"/>
    <property type="molecule type" value="mRNA"/>
</dbReference>
<dbReference type="CCDS" id="CCDS11684.1">
    <molecule id="Q8WWZ4-1"/>
</dbReference>
<dbReference type="RefSeq" id="NP_001364250.1">
    <molecule id="Q8WWZ4-1"/>
    <property type="nucleotide sequence ID" value="NM_001377321.1"/>
</dbReference>
<dbReference type="RefSeq" id="NP_525021.3">
    <molecule id="Q8WWZ4-1"/>
    <property type="nucleotide sequence ID" value="NM_080282.3"/>
</dbReference>
<dbReference type="SMR" id="Q8WWZ4"/>
<dbReference type="BioGRID" id="115630">
    <property type="interactions" value="8"/>
</dbReference>
<dbReference type="FunCoup" id="Q8WWZ4">
    <property type="interactions" value="152"/>
</dbReference>
<dbReference type="IntAct" id="Q8WWZ4">
    <property type="interactions" value="5"/>
</dbReference>
<dbReference type="STRING" id="9606.ENSP00000269081"/>
<dbReference type="TCDB" id="3.A.1.211.17">
    <property type="family name" value="the atp-binding cassette (abc) superfamily"/>
</dbReference>
<dbReference type="GlyGen" id="Q8WWZ4">
    <property type="glycosylation" value="1 site, 1 O-linked glycan (1 site)"/>
</dbReference>
<dbReference type="iPTMnet" id="Q8WWZ4"/>
<dbReference type="PhosphoSitePlus" id="Q8WWZ4"/>
<dbReference type="BioMuta" id="ABCA10"/>
<dbReference type="DMDM" id="296439455"/>
<dbReference type="jPOST" id="Q8WWZ4"/>
<dbReference type="MassIVE" id="Q8WWZ4"/>
<dbReference type="PaxDb" id="9606-ENSP00000269081"/>
<dbReference type="PeptideAtlas" id="Q8WWZ4"/>
<dbReference type="ProteomicsDB" id="74965">
    <molecule id="Q8WWZ4-1"/>
</dbReference>
<dbReference type="ProteomicsDB" id="74966">
    <molecule id="Q8WWZ4-2"/>
</dbReference>
<dbReference type="Antibodypedia" id="2899">
    <property type="antibodies" value="50 antibodies from 17 providers"/>
</dbReference>
<dbReference type="DNASU" id="10349"/>
<dbReference type="Ensembl" id="ENST00000269081.8">
    <molecule id="Q8WWZ4-1"/>
    <property type="protein sequence ID" value="ENSP00000269081.4"/>
    <property type="gene ID" value="ENSG00000154263.18"/>
</dbReference>
<dbReference type="Ensembl" id="ENST00000522406.5">
    <molecule id="Q8WWZ4-5"/>
    <property type="protein sequence ID" value="ENSP00000429853.1"/>
    <property type="gene ID" value="ENSG00000154263.18"/>
</dbReference>
<dbReference type="Ensembl" id="ENST00000523512.5">
    <molecule id="Q8WWZ4-3"/>
    <property type="protein sequence ID" value="ENSP00000429945.1"/>
    <property type="gene ID" value="ENSG00000154263.18"/>
</dbReference>
<dbReference type="Ensembl" id="ENST00000690296.1">
    <molecule id="Q8WWZ4-1"/>
    <property type="protein sequence ID" value="ENSP00000509702.1"/>
    <property type="gene ID" value="ENSG00000154263.18"/>
</dbReference>
<dbReference type="GeneID" id="10349"/>
<dbReference type="KEGG" id="hsa:10349"/>
<dbReference type="MANE-Select" id="ENST00000690296.1">
    <property type="protein sequence ID" value="ENSP00000509702.1"/>
    <property type="RefSeq nucleotide sequence ID" value="NM_001377321.1"/>
    <property type="RefSeq protein sequence ID" value="NP_001364250.1"/>
</dbReference>
<dbReference type="UCSC" id="uc010dfa.2">
    <molecule id="Q8WWZ4-1"/>
    <property type="organism name" value="human"/>
</dbReference>
<dbReference type="AGR" id="HGNC:30"/>
<dbReference type="CTD" id="10349"/>
<dbReference type="DisGeNET" id="10349"/>
<dbReference type="GeneCards" id="ABCA10"/>
<dbReference type="HGNC" id="HGNC:30">
    <property type="gene designation" value="ABCA10"/>
</dbReference>
<dbReference type="HPA" id="ENSG00000154263">
    <property type="expression patterns" value="Tissue enhanced (ovary)"/>
</dbReference>
<dbReference type="MIM" id="612508">
    <property type="type" value="gene"/>
</dbReference>
<dbReference type="neXtProt" id="NX_Q8WWZ4"/>
<dbReference type="OpenTargets" id="ENSG00000154263"/>
<dbReference type="PharmGKB" id="PA24374"/>
<dbReference type="VEuPathDB" id="HostDB:ENSG00000154263"/>
<dbReference type="eggNOG" id="KOG0059">
    <property type="taxonomic scope" value="Eukaryota"/>
</dbReference>
<dbReference type="GeneTree" id="ENSGT00940000162673"/>
<dbReference type="HOGENOM" id="CLU_000604_19_1_1"/>
<dbReference type="InParanoid" id="Q8WWZ4"/>
<dbReference type="OMA" id="LCKEQEM"/>
<dbReference type="OrthoDB" id="8061355at2759"/>
<dbReference type="PAN-GO" id="Q8WWZ4">
    <property type="GO annotations" value="4 GO annotations based on evolutionary models"/>
</dbReference>
<dbReference type="PhylomeDB" id="Q8WWZ4"/>
<dbReference type="TreeFam" id="TF105192"/>
<dbReference type="PathwayCommons" id="Q8WWZ4"/>
<dbReference type="Reactome" id="R-HSA-1369062">
    <property type="pathway name" value="ABC transporters in lipid homeostasis"/>
</dbReference>
<dbReference type="SignaLink" id="Q8WWZ4"/>
<dbReference type="BioGRID-ORCS" id="10349">
    <property type="hits" value="12 hits in 1146 CRISPR screens"/>
</dbReference>
<dbReference type="ChiTaRS" id="ABCA10">
    <property type="organism name" value="human"/>
</dbReference>
<dbReference type="GenomeRNAi" id="10349"/>
<dbReference type="Pharos" id="Q8WWZ4">
    <property type="development level" value="Tdark"/>
</dbReference>
<dbReference type="PRO" id="PR:Q8WWZ4"/>
<dbReference type="Proteomes" id="UP000005640">
    <property type="component" value="Chromosome 17"/>
</dbReference>
<dbReference type="RNAct" id="Q8WWZ4">
    <property type="molecule type" value="protein"/>
</dbReference>
<dbReference type="Bgee" id="ENSG00000154263">
    <property type="expression patterns" value="Expressed in tibial nerve and 97 other cell types or tissues"/>
</dbReference>
<dbReference type="ExpressionAtlas" id="Q8WWZ4">
    <property type="expression patterns" value="baseline and differential"/>
</dbReference>
<dbReference type="GO" id="GO:0043231">
    <property type="term" value="C:intracellular membrane-bounded organelle"/>
    <property type="evidence" value="ECO:0000318"/>
    <property type="project" value="GO_Central"/>
</dbReference>
<dbReference type="GO" id="GO:0016020">
    <property type="term" value="C:membrane"/>
    <property type="evidence" value="ECO:0007669"/>
    <property type="project" value="UniProtKB-SubCell"/>
</dbReference>
<dbReference type="GO" id="GO:0140359">
    <property type="term" value="F:ABC-type transporter activity"/>
    <property type="evidence" value="ECO:0007669"/>
    <property type="project" value="InterPro"/>
</dbReference>
<dbReference type="GO" id="GO:0005524">
    <property type="term" value="F:ATP binding"/>
    <property type="evidence" value="ECO:0007669"/>
    <property type="project" value="UniProtKB-KW"/>
</dbReference>
<dbReference type="GO" id="GO:0016887">
    <property type="term" value="F:ATP hydrolysis activity"/>
    <property type="evidence" value="ECO:0007669"/>
    <property type="project" value="InterPro"/>
</dbReference>
<dbReference type="GO" id="GO:0042626">
    <property type="term" value="F:ATPase-coupled transmembrane transporter activity"/>
    <property type="evidence" value="ECO:0000318"/>
    <property type="project" value="GO_Central"/>
</dbReference>
<dbReference type="GO" id="GO:0005319">
    <property type="term" value="F:lipid transporter activity"/>
    <property type="evidence" value="ECO:0000318"/>
    <property type="project" value="GO_Central"/>
</dbReference>
<dbReference type="GO" id="GO:0006869">
    <property type="term" value="P:lipid transport"/>
    <property type="evidence" value="ECO:0000318"/>
    <property type="project" value="GO_Central"/>
</dbReference>
<dbReference type="CDD" id="cd03263">
    <property type="entry name" value="ABC_subfamily_A"/>
    <property type="match status" value="2"/>
</dbReference>
<dbReference type="FunFam" id="3.40.50.300:FF:000335">
    <property type="entry name" value="ATP binding cassette subfamily A member 5"/>
    <property type="match status" value="1"/>
</dbReference>
<dbReference type="FunFam" id="3.40.50.300:FF:000436">
    <property type="entry name" value="ATP binding cassette subfamily A member 9"/>
    <property type="match status" value="1"/>
</dbReference>
<dbReference type="Gene3D" id="3.40.50.300">
    <property type="entry name" value="P-loop containing nucleotide triphosphate hydrolases"/>
    <property type="match status" value="2"/>
</dbReference>
<dbReference type="InterPro" id="IPR003593">
    <property type="entry name" value="AAA+_ATPase"/>
</dbReference>
<dbReference type="InterPro" id="IPR013525">
    <property type="entry name" value="ABC2_TM"/>
</dbReference>
<dbReference type="InterPro" id="IPR003439">
    <property type="entry name" value="ABC_transporter-like_ATP-bd"/>
</dbReference>
<dbReference type="InterPro" id="IPR017871">
    <property type="entry name" value="ABC_transporter-like_CS"/>
</dbReference>
<dbReference type="InterPro" id="IPR026082">
    <property type="entry name" value="ABCA"/>
</dbReference>
<dbReference type="InterPro" id="IPR027417">
    <property type="entry name" value="P-loop_NTPase"/>
</dbReference>
<dbReference type="InterPro" id="IPR056264">
    <property type="entry name" value="R2_ABCA1-4-like"/>
</dbReference>
<dbReference type="PANTHER" id="PTHR19229:SF269">
    <property type="entry name" value="ATP-BINDING CASSETTE SUB-FAMILY A MEMBER 10"/>
    <property type="match status" value="1"/>
</dbReference>
<dbReference type="PANTHER" id="PTHR19229">
    <property type="entry name" value="ATP-BINDING CASSETTE TRANSPORTER SUBFAMILY A ABCA"/>
    <property type="match status" value="1"/>
</dbReference>
<dbReference type="Pfam" id="PF12698">
    <property type="entry name" value="ABC2_membrane_3"/>
    <property type="match status" value="2"/>
</dbReference>
<dbReference type="Pfam" id="PF00005">
    <property type="entry name" value="ABC_tran"/>
    <property type="match status" value="2"/>
</dbReference>
<dbReference type="Pfam" id="PF23321">
    <property type="entry name" value="R1_ABCA1"/>
    <property type="match status" value="1"/>
</dbReference>
<dbReference type="SMART" id="SM00382">
    <property type="entry name" value="AAA"/>
    <property type="match status" value="2"/>
</dbReference>
<dbReference type="SUPFAM" id="SSF52540">
    <property type="entry name" value="P-loop containing nucleoside triphosphate hydrolases"/>
    <property type="match status" value="2"/>
</dbReference>
<dbReference type="PROSITE" id="PS00211">
    <property type="entry name" value="ABC_TRANSPORTER_1"/>
    <property type="match status" value="1"/>
</dbReference>
<dbReference type="PROSITE" id="PS50893">
    <property type="entry name" value="ABC_TRANSPORTER_2"/>
    <property type="match status" value="2"/>
</dbReference>
<proteinExistence type="evidence at transcript level"/>
<sequence length="1543" mass="175790">MNKMALASFMKGRTVIGTPDEETMDIELPKKYHEMVGVIFSDTFSYRLKFNWGYRIPVIKEHSEYTEHCWAMHGEIFCYLAKYWLKGFVAFQAAINAAIIEVTTNHSVMEELTSVIGINMKIPPFISKGEIMNEWFHFTCLVSFSSFIYFASLNVARERGKFKKLMTVMGLRESAFWLSWGLTYICFIFIMSIFMALVITSIPIVFHTGFMVIFTLYSLYGLSLIALAFLMSVLIRKPMLAGLAGFLFTVFWGCLGFTVLYRQLPLSLGWVLSLLSPFAFTAGMAQITHLDNYLSGVIFPDPSGDSYKMIATFFILAFDTLFYLIFTLYFERVLPDKDGHGDSPLFFLKSSFWSKHQNTHHEIFENEINPEHSSDDSFEPVSPEFHGKEAIRIRNVIKEYNGKTGKVEALQGIFFDIYEGQITAILGHNGAGKSTLLNILSGLSVSTEGSATIYNTQLSEITDMEEIRKNIGFCPQFNFQFDFLTVRENLRVFAKIKGIQPKEVEQEVKRIIMELDMQSIQDIIAKKLSGGQKRKLTLGIAILGDPQVLLLDEPTAGLDPFSRHRVWSLLKEHKVDRLILFSTQFMDEADILADRKVFLSNGKLKCAGSSLFLKRKWGIGYHLSLHRNEMCDTEKITSLIKQHIPDAKLTTESEEKLVYSLPLEKTNKFPDLYSDLDKCSDQGIRNYAVSVTSLNEVFLNLEGKSAIDEPDFDIGKQEKIHVTRNTGDESEMEQVLCSLPETRKAVSSAALWRRQIYAVATLRFLKLRRERRALLCLLLVLGIAFIPIILEKIMYKVTRETHCWEFSPSMYFLSLEQIPKTPLTSLLIVNNTGSNIEDLVHSLKCQDIVLEIDDFRNRNGSDDPSYNGAIIVSGDQKDYRFSVACNTKKLNCFPVLMGIVSNALMGIFNFTELIQMESTSFSRDDIVLDLGFIDGSIFLLLITNCVSPFIGMSSISDYKKNVQSQLWISGLWPSAYWCGQALVDIPLYFLILFSIHLIYYFIFLGFQLSWELMFVLVVCIIGCAVSLIFLTYVLSFIFRKWRKNNGFWSFGFFIILICVSTIMVSTQYEKLNLILCMIFIPSFTLLGYVMLLIQLDFMRNLDSLDNRINEVNKTILLTTLIPYLQSVIFLFVIRCLEMKYGNEIMNKDPVFRISPRSRETHPNPEEPEEEDEDVQAERVQAANALTAPNLEEEPVITASCLHKEYYETKKSCFSTRKKKIAIRNVSFCVKKGEVLGLLGHNGAGKSTSIKMITGCTKPTAGVVVLQGSRASVRQQHDNSLKFLGYCPQENSLWPKLTMKEHLELYAAVKGLGKEDAALSISRLVEALKLQEQLKAPVKTLSEGIKRKLCFVLSILGNPSVVLLDEPFTGMDPEGQQQMWQILQATVKNKERGTLLTTHYMSEAEAVCDRMAMMVSGTLRCIGSIQHLKNKFGRDYLLEIKMKEPTQVEALHTEILKLFPQAAWQERYSSLMAYKLPVEDVHPLSRAFFKLEAMKQTFNLEEYSLSQATLEQVFLELCKEQELGNVDDKIDTTVEWKLLPQEDP</sequence>
<reference key="1">
    <citation type="journal article" date="2001" name="GeneScreen">
        <title>Identifying and characterizing a five-gene cluster of ATP-binding cassette transporters mapping to human chromosome 17q24: a new subgroup within the ABCA subfamily.</title>
        <authorList>
            <person name="Arnould I."/>
            <person name="Schriml L.M."/>
            <person name="Prades C."/>
            <person name="Lachtermacher-Triunfol M."/>
            <person name="Schneider T."/>
            <person name="Maintoux C."/>
            <person name="Lemoine C."/>
            <person name="Debono D."/>
            <person name="Devaud C."/>
            <person name="Naudin L."/>
            <person name="Bauche S."/>
            <person name="Annat M."/>
            <person name="Annilo T."/>
            <person name="Allikmets R."/>
            <person name="Gold B."/>
            <person name="Denefle P."/>
            <person name="Rosier M."/>
            <person name="Dean M."/>
        </authorList>
    </citation>
    <scope>NUCLEOTIDE SEQUENCE [MRNA] (ISOFORM 1)</scope>
    <scope>TISSUE SPECIFICITY</scope>
    <scope>VARIANTS SER-203; VAL-287 AND THR-916</scope>
</reference>
<reference key="2">
    <citation type="journal article" date="2003" name="Biochem. Biophys. Res. Commun.">
        <title>ABCA10, a novel cholesterol-regulated ABCA6-like ABC transporter.</title>
        <authorList>
            <person name="Wenzel J.J."/>
            <person name="Kaminski W.E."/>
            <person name="Piehler A."/>
            <person name="Heimerl S."/>
            <person name="Langmann T."/>
            <person name="Schmitz G."/>
        </authorList>
    </citation>
    <scope>NUCLEOTIDE SEQUENCE [GENOMIC DNA / MRNA] (ISOFORM 1)</scope>
    <scope>VARIANTS SER-203 AND VAL-287</scope>
    <scope>ALTERNATIVE SPLICING (ISOFORMS 2; 3 AND 4)</scope>
    <scope>TISSUE SPECIFICITY</scope>
    <scope>INDUCTION</scope>
    <scope>FUNCTION</scope>
    <source>
        <tissue>Macrophage</tissue>
    </source>
</reference>
<reference key="3">
    <citation type="journal article" date="2007" name="BMC Genomics">
        <title>The full-ORF clone resource of the German cDNA consortium.</title>
        <authorList>
            <person name="Bechtel S."/>
            <person name="Rosenfelder H."/>
            <person name="Duda A."/>
            <person name="Schmidt C.P."/>
            <person name="Ernst U."/>
            <person name="Wellenreuther R."/>
            <person name="Mehrle A."/>
            <person name="Schuster C."/>
            <person name="Bahr A."/>
            <person name="Bloecker H."/>
            <person name="Heubner D."/>
            <person name="Hoerlein A."/>
            <person name="Michel G."/>
            <person name="Wedler H."/>
            <person name="Koehrer K."/>
            <person name="Ottenwaelder B."/>
            <person name="Poustka A."/>
            <person name="Wiemann S."/>
            <person name="Schupp I."/>
        </authorList>
    </citation>
    <scope>NUCLEOTIDE SEQUENCE [LARGE SCALE MRNA] (ISOFORM 5)</scope>
    <scope>VARIANTS SER-203 AND VAL-287</scope>
    <source>
        <tissue>Skeletal muscle</tissue>
    </source>
</reference>
<reference key="4">
    <citation type="journal article" date="2006" name="Nature">
        <title>DNA sequence of human chromosome 17 and analysis of rearrangement in the human lineage.</title>
        <authorList>
            <person name="Zody M.C."/>
            <person name="Garber M."/>
            <person name="Adams D.J."/>
            <person name="Sharpe T."/>
            <person name="Harrow J."/>
            <person name="Lupski J.R."/>
            <person name="Nicholson C."/>
            <person name="Searle S.M."/>
            <person name="Wilming L."/>
            <person name="Young S.K."/>
            <person name="Abouelleil A."/>
            <person name="Allen N.R."/>
            <person name="Bi W."/>
            <person name="Bloom T."/>
            <person name="Borowsky M.L."/>
            <person name="Bugalter B.E."/>
            <person name="Butler J."/>
            <person name="Chang J.L."/>
            <person name="Chen C.-K."/>
            <person name="Cook A."/>
            <person name="Corum B."/>
            <person name="Cuomo C.A."/>
            <person name="de Jong P.J."/>
            <person name="DeCaprio D."/>
            <person name="Dewar K."/>
            <person name="FitzGerald M."/>
            <person name="Gilbert J."/>
            <person name="Gibson R."/>
            <person name="Gnerre S."/>
            <person name="Goldstein S."/>
            <person name="Grafham D.V."/>
            <person name="Grocock R."/>
            <person name="Hafez N."/>
            <person name="Hagopian D.S."/>
            <person name="Hart E."/>
            <person name="Norman C.H."/>
            <person name="Humphray S."/>
            <person name="Jaffe D.B."/>
            <person name="Jones M."/>
            <person name="Kamal M."/>
            <person name="Khodiyar V.K."/>
            <person name="LaButti K."/>
            <person name="Laird G."/>
            <person name="Lehoczky J."/>
            <person name="Liu X."/>
            <person name="Lokyitsang T."/>
            <person name="Loveland J."/>
            <person name="Lui A."/>
            <person name="Macdonald P."/>
            <person name="Major J.E."/>
            <person name="Matthews L."/>
            <person name="Mauceli E."/>
            <person name="McCarroll S.A."/>
            <person name="Mihalev A.H."/>
            <person name="Mudge J."/>
            <person name="Nguyen C."/>
            <person name="Nicol R."/>
            <person name="O'Leary S.B."/>
            <person name="Osoegawa K."/>
            <person name="Schwartz D.C."/>
            <person name="Shaw-Smith C."/>
            <person name="Stankiewicz P."/>
            <person name="Steward C."/>
            <person name="Swarbreck D."/>
            <person name="Venkataraman V."/>
            <person name="Whittaker C.A."/>
            <person name="Yang X."/>
            <person name="Zimmer A.R."/>
            <person name="Bradley A."/>
            <person name="Hubbard T."/>
            <person name="Birren B.W."/>
            <person name="Rogers J."/>
            <person name="Lander E.S."/>
            <person name="Nusbaum C."/>
        </authorList>
    </citation>
    <scope>NUCLEOTIDE SEQUENCE [LARGE SCALE GENOMIC DNA]</scope>
</reference>
<reference key="5">
    <citation type="journal article" date="2004" name="Genome Res.">
        <title>The status, quality, and expansion of the NIH full-length cDNA project: the Mammalian Gene Collection (MGC).</title>
        <authorList>
            <consortium name="The MGC Project Team"/>
        </authorList>
    </citation>
    <scope>NUCLEOTIDE SEQUENCE [LARGE SCALE MRNA] OF 1125-1543 (ISOFORMS 1/2)</scope>
    <source>
        <tissue>Liver</tissue>
        <tissue>Pancreatic carcinoma</tissue>
    </source>
</reference>